<gene>
    <name type="primary">sox7</name>
</gene>
<dbReference type="EMBL" id="D83649">
    <property type="protein sequence ID" value="BAA22513.1"/>
    <property type="molecule type" value="mRNA"/>
</dbReference>
<dbReference type="RefSeq" id="NP_001079337.1">
    <property type="nucleotide sequence ID" value="NM_001085868.1"/>
</dbReference>
<dbReference type="SMR" id="O42342"/>
<dbReference type="GeneID" id="378665"/>
<dbReference type="KEGG" id="xla:378665"/>
<dbReference type="AGR" id="Xenbase:XB-GENE-865761"/>
<dbReference type="CTD" id="378665"/>
<dbReference type="Xenbase" id="XB-GENE-865761">
    <property type="gene designation" value="sox7.L"/>
</dbReference>
<dbReference type="OMA" id="CQEEHAH"/>
<dbReference type="OrthoDB" id="6247875at2759"/>
<dbReference type="Proteomes" id="UP000186698">
    <property type="component" value="Chromosome 5L"/>
</dbReference>
<dbReference type="Bgee" id="378665">
    <property type="expression patterns" value="Expressed in camera-type eye and 19 other cell types or tissues"/>
</dbReference>
<dbReference type="GO" id="GO:0005634">
    <property type="term" value="C:nucleus"/>
    <property type="evidence" value="ECO:0000250"/>
    <property type="project" value="UniProtKB"/>
</dbReference>
<dbReference type="GO" id="GO:0001228">
    <property type="term" value="F:DNA-binding transcription activator activity, RNA polymerase II-specific"/>
    <property type="evidence" value="ECO:0000318"/>
    <property type="project" value="GO_Central"/>
</dbReference>
<dbReference type="GO" id="GO:0000978">
    <property type="term" value="F:RNA polymerase II cis-regulatory region sequence-specific DNA binding"/>
    <property type="evidence" value="ECO:0000318"/>
    <property type="project" value="GO_Central"/>
</dbReference>
<dbReference type="GO" id="GO:0043565">
    <property type="term" value="F:sequence-specific DNA binding"/>
    <property type="evidence" value="ECO:0000314"/>
    <property type="project" value="UniProtKB"/>
</dbReference>
<dbReference type="GO" id="GO:0000976">
    <property type="term" value="F:transcription cis-regulatory region binding"/>
    <property type="evidence" value="ECO:0000314"/>
    <property type="project" value="UniProtKB"/>
</dbReference>
<dbReference type="GO" id="GO:0030154">
    <property type="term" value="P:cell differentiation"/>
    <property type="evidence" value="ECO:0000318"/>
    <property type="project" value="GO_Central"/>
</dbReference>
<dbReference type="GO" id="GO:0001706">
    <property type="term" value="P:endoderm formation"/>
    <property type="evidence" value="ECO:0000315"/>
    <property type="project" value="UniProtKB"/>
</dbReference>
<dbReference type="GO" id="GO:0007507">
    <property type="term" value="P:heart development"/>
    <property type="evidence" value="ECO:0000315"/>
    <property type="project" value="UniProtKB"/>
</dbReference>
<dbReference type="GO" id="GO:0030178">
    <property type="term" value="P:negative regulation of Wnt signaling pathway"/>
    <property type="evidence" value="ECO:0000315"/>
    <property type="project" value="UniProtKB"/>
</dbReference>
<dbReference type="GO" id="GO:0045944">
    <property type="term" value="P:positive regulation of transcription by RNA polymerase II"/>
    <property type="evidence" value="ECO:0000315"/>
    <property type="project" value="UniProtKB"/>
</dbReference>
<dbReference type="GO" id="GO:0048793">
    <property type="term" value="P:pronephros development"/>
    <property type="evidence" value="ECO:0000250"/>
    <property type="project" value="UniProtKB"/>
</dbReference>
<dbReference type="CDD" id="cd22046">
    <property type="entry name" value="HMG-box_SoxF_SOX7"/>
    <property type="match status" value="1"/>
</dbReference>
<dbReference type="FunFam" id="1.10.30.10:FF:000008">
    <property type="entry name" value="transcription factor SOX-7"/>
    <property type="match status" value="1"/>
</dbReference>
<dbReference type="Gene3D" id="1.10.30.10">
    <property type="entry name" value="High mobility group box domain"/>
    <property type="match status" value="1"/>
</dbReference>
<dbReference type="InterPro" id="IPR009071">
    <property type="entry name" value="HMG_box_dom"/>
</dbReference>
<dbReference type="InterPro" id="IPR036910">
    <property type="entry name" value="HMG_box_dom_sf"/>
</dbReference>
<dbReference type="InterPro" id="IPR033392">
    <property type="entry name" value="Sox7/17/18_central"/>
</dbReference>
<dbReference type="InterPro" id="IPR021934">
    <property type="entry name" value="Sox_C"/>
</dbReference>
<dbReference type="InterPro" id="IPR050140">
    <property type="entry name" value="SRY-related_HMG-box_TF-like"/>
</dbReference>
<dbReference type="PANTHER" id="PTHR10270">
    <property type="entry name" value="SOX TRANSCRIPTION FACTOR"/>
    <property type="match status" value="1"/>
</dbReference>
<dbReference type="PANTHER" id="PTHR10270:SF210">
    <property type="entry name" value="TRANSCRIPTION FACTOR SOX-7"/>
    <property type="match status" value="1"/>
</dbReference>
<dbReference type="Pfam" id="PF00505">
    <property type="entry name" value="HMG_box"/>
    <property type="match status" value="1"/>
</dbReference>
<dbReference type="Pfam" id="PF12067">
    <property type="entry name" value="Sox17_18_mid"/>
    <property type="match status" value="1"/>
</dbReference>
<dbReference type="SMART" id="SM00398">
    <property type="entry name" value="HMG"/>
    <property type="match status" value="1"/>
</dbReference>
<dbReference type="SUPFAM" id="SSF47095">
    <property type="entry name" value="HMG-box"/>
    <property type="match status" value="1"/>
</dbReference>
<dbReference type="PROSITE" id="PS50118">
    <property type="entry name" value="HMG_BOX_2"/>
    <property type="match status" value="1"/>
</dbReference>
<dbReference type="PROSITE" id="PS51516">
    <property type="entry name" value="SOX_C"/>
    <property type="match status" value="1"/>
</dbReference>
<protein>
    <recommendedName>
        <fullName>Transcription factor Sox-7</fullName>
        <shortName>xSOX7</shortName>
    </recommendedName>
</protein>
<proteinExistence type="evidence at transcript level"/>
<accession>O42342</accession>
<keyword id="KW-0010">Activator</keyword>
<keyword id="KW-0217">Developmental protein</keyword>
<keyword id="KW-0221">Differentiation</keyword>
<keyword id="KW-0238">DNA-binding</keyword>
<keyword id="KW-0539">Nucleus</keyword>
<keyword id="KW-1185">Reference proteome</keyword>
<keyword id="KW-0804">Transcription</keyword>
<keyword id="KW-0805">Transcription regulation</keyword>
<name>SOX7_XENLA</name>
<comment type="function">
    <text evidence="1 6 7 8 9">Transcription factor. Binds to the DNA sequence 5'-AACAAT-3'. Acts downstream of vegt and upstream of nodal signaling to promote endodermal and mesodermal differentiation by promoting vegt-induced expression of both endodermal genes (including endodermin) and mesodermal genes (including snai1/snail and snai2/slug). Induces expression of multiple nodal genes (including nodal, nodal2, nodal4, nodal5 and nodal6) and binds directly to sites within the promoter of the nodal5 gene. The endodermal and mesodermal specification pathways then interact to initiate cardiogenesis. Acts partially redundantly with sox18 during cardiogenesis. Also acts as an antagonist of beta-catenin signaling. Regulates (possibly indirectly) development of the pronephros, the functional larval kidney.</text>
</comment>
<comment type="subcellular location">
    <subcellularLocation>
        <location evidence="10">Nucleus</location>
    </subcellularLocation>
</comment>
<comment type="tissue specificity">
    <text evidence="5 7 9">Localized to the vegetal hemisphere of blastula embryos. Tissue-specific expression in early neurula (stage 13-14) embryos begins in the ciliate cells of the epidermis. Starting about stage 24, expression is found in a lateral stripe on each side of the embryo, with expression extending more posteriorly as development proceeds. Expressed in embryonic vasculature, as well as in the procardia tube, endocardium, notochord and hindbrain. As development proceeds, strong expression is seen in the hindbrain, posterior cardinal veins, aortic arch, stomodeal depression, epithelium and intersomitic arteries of stage 33/34 larvae. Expressed in posterior rhombomeres. By stage 40 larvae, expression in most of the vascular endothelia disappears, in particular in the posterior cardinal vein, but expression continues in the hindbrain. Expressed in a wide range of adult tissues, including ovary, testis, kidney, bladder, duodenum and liver.</text>
</comment>
<comment type="developmental stage">
    <text evidence="5 9">Expressed both maternally and zygotically. Expressed in oocytes, eggs, throughout early embryonic development, and in adults.</text>
</comment>
<comment type="induction">
    <text evidence="6">By maternal vegt.</text>
</comment>
<reference evidence="10 11" key="1">
    <citation type="journal article" date="1996" name="Biochim. Biophys. Acta">
        <title>Cloning and characterization of Xenopus laevis xSox7 cDNA.</title>
        <authorList>
            <person name="Shiozawa M."/>
            <person name="Hiraoka Y."/>
            <person name="Komatsu N."/>
            <person name="Ogawa M."/>
            <person name="Sakai Y."/>
            <person name="Aiso S."/>
        </authorList>
    </citation>
    <scope>NUCLEOTIDE SEQUENCE [MRNA]</scope>
    <scope>FUNCTION</scope>
    <scope>TISSUE SPECIFICITY</scope>
    <scope>DEVELOPMENTAL STAGE</scope>
    <source>
        <tissue evidence="11">Ovary</tissue>
    </source>
</reference>
<reference evidence="10" key="2">
    <citation type="journal article" date="2004" name="Gene Expr. Patterns">
        <title>Embryonic expression of Xenopus laevis SOX7.</title>
        <authorList>
            <person name="Fawcett S.R."/>
            <person name="Klymkowsky M.W."/>
        </authorList>
    </citation>
    <scope>TISSUE SPECIFICITY</scope>
    <scope>DEVELOPMENTAL STAGE</scope>
</reference>
<reference evidence="10" key="3">
    <citation type="journal article" date="2005" name="Dev. Biol.">
        <title>SOX7 is an immediate-early target of VegT and regulates Nodal-related gene expression in Xenopus.</title>
        <authorList>
            <person name="Zhang C."/>
            <person name="Basta T."/>
            <person name="Fawcett S.R."/>
            <person name="Klymkowsky M.W."/>
        </authorList>
    </citation>
    <scope>FUNCTION</scope>
    <scope>INDUCTION</scope>
</reference>
<reference evidence="10" key="4">
    <citation type="journal article" date="2005" name="Dev. Dyn.">
        <title>SOX7 and SOX18 are essential for cardiogenesis in Xenopus.</title>
        <authorList>
            <person name="Zhang C."/>
            <person name="Basta T."/>
            <person name="Klymkowsky M.W."/>
        </authorList>
    </citation>
    <scope>FUNCTION</scope>
    <scope>TISSUE SPECIFICITY</scope>
</reference>
<reference evidence="10" key="5">
    <citation type="journal article" date="2007" name="Differentiation">
        <title>The Sox axis, Nodal signaling, and germ layer specification.</title>
        <authorList>
            <person name="Zhang C."/>
            <person name="Klymkowsky M.W."/>
        </authorList>
    </citation>
    <scope>FUNCTION</scope>
</reference>
<feature type="chain" id="PRO_0000371504" description="Transcription factor Sox-7">
    <location>
        <begin position="1"/>
        <end position="362"/>
    </location>
</feature>
<feature type="domain" description="Sox C-terminal" evidence="3">
    <location>
        <begin position="246"/>
        <end position="362"/>
    </location>
</feature>
<feature type="DNA-binding region" description="HMG box" evidence="2">
    <location>
        <begin position="42"/>
        <end position="110"/>
    </location>
</feature>
<feature type="region of interest" description="Disordered" evidence="4">
    <location>
        <begin position="19"/>
        <end position="41"/>
    </location>
</feature>
<feature type="compositionally biased region" description="Basic and acidic residues" evidence="4">
    <location>
        <begin position="32"/>
        <end position="41"/>
    </location>
</feature>
<sequence length="362" mass="40875">MTTLMGSYSWTESLDCSPMDGDLSDGLSPHRSPREKGSETRIRRPMNAFMVWAKDERKRLAVQNPDLHNAELSKMLGKSWKALSPAQKRPYVEEAERLRVQHMQDYPNYKYRPRRKKQIKRICKRVDTGFLLGSLSKDQNSVPDTRGCRTAMEKEENGGYPGAALSDIRHYRETPSNGNKYDQTYPYGLPTPPEMSPLEAIDQDQSFYSTSCSEDCHSHINGAVYPPEYSRSPILCSHLSQVPIPQPGSSMIPPVPTCPPAYYSSSYHSIHNYHAHLGQLSPPPEHPHYDTIDQISQAELLGEMDRNEFDQYLNTSLQDPTEMTIHGHVQVSQASDIQPSETSLISVLADATATYYNSYSVS</sequence>
<evidence type="ECO:0000250" key="1">
    <source>
        <dbReference type="UniProtKB" id="Q28GD5"/>
    </source>
</evidence>
<evidence type="ECO:0000255" key="2">
    <source>
        <dbReference type="PROSITE-ProRule" id="PRU00267"/>
    </source>
</evidence>
<evidence type="ECO:0000255" key="3">
    <source>
        <dbReference type="PROSITE-ProRule" id="PRU00849"/>
    </source>
</evidence>
<evidence type="ECO:0000256" key="4">
    <source>
        <dbReference type="SAM" id="MobiDB-lite"/>
    </source>
</evidence>
<evidence type="ECO:0000269" key="5">
    <source>
    </source>
</evidence>
<evidence type="ECO:0000269" key="6">
    <source>
    </source>
</evidence>
<evidence type="ECO:0000269" key="7">
    <source>
    </source>
</evidence>
<evidence type="ECO:0000269" key="8">
    <source>
    </source>
</evidence>
<evidence type="ECO:0000269" key="9">
    <source>
    </source>
</evidence>
<evidence type="ECO:0000305" key="10"/>
<evidence type="ECO:0000312" key="11">
    <source>
        <dbReference type="EMBL" id="BAA22513.1"/>
    </source>
</evidence>
<organism>
    <name type="scientific">Xenopus laevis</name>
    <name type="common">African clawed frog</name>
    <dbReference type="NCBI Taxonomy" id="8355"/>
    <lineage>
        <taxon>Eukaryota</taxon>
        <taxon>Metazoa</taxon>
        <taxon>Chordata</taxon>
        <taxon>Craniata</taxon>
        <taxon>Vertebrata</taxon>
        <taxon>Euteleostomi</taxon>
        <taxon>Amphibia</taxon>
        <taxon>Batrachia</taxon>
        <taxon>Anura</taxon>
        <taxon>Pipoidea</taxon>
        <taxon>Pipidae</taxon>
        <taxon>Xenopodinae</taxon>
        <taxon>Xenopus</taxon>
        <taxon>Xenopus</taxon>
    </lineage>
</organism>